<gene>
    <name type="primary">pdp</name>
    <name type="synonym">pyn</name>
    <name type="ordered locus">SAOUHSC_02377</name>
</gene>
<comment type="function">
    <text evidence="1">Catalyzes phosphorolysis of the pyrimidine nucleosides uridine, thymidine and 2'-deoxyuridine with the formation of the corresponding pyrimidine base and ribose-1-phosphate.</text>
</comment>
<comment type="catalytic activity">
    <reaction evidence="1">
        <text>uridine + phosphate = alpha-D-ribose 1-phosphate + uracil</text>
        <dbReference type="Rhea" id="RHEA:24388"/>
        <dbReference type="ChEBI" id="CHEBI:16704"/>
        <dbReference type="ChEBI" id="CHEBI:17568"/>
        <dbReference type="ChEBI" id="CHEBI:43474"/>
        <dbReference type="ChEBI" id="CHEBI:57720"/>
        <dbReference type="EC" id="2.4.2.2"/>
    </reaction>
</comment>
<comment type="catalytic activity">
    <reaction evidence="1">
        <text>thymidine + phosphate = 2-deoxy-alpha-D-ribose 1-phosphate + thymine</text>
        <dbReference type="Rhea" id="RHEA:16037"/>
        <dbReference type="ChEBI" id="CHEBI:17748"/>
        <dbReference type="ChEBI" id="CHEBI:17821"/>
        <dbReference type="ChEBI" id="CHEBI:43474"/>
        <dbReference type="ChEBI" id="CHEBI:57259"/>
        <dbReference type="EC" id="2.4.2.2"/>
    </reaction>
</comment>
<comment type="catalytic activity">
    <reaction evidence="1">
        <text>2'-deoxyuridine + phosphate = 2-deoxy-alpha-D-ribose 1-phosphate + uracil</text>
        <dbReference type="Rhea" id="RHEA:22824"/>
        <dbReference type="ChEBI" id="CHEBI:16450"/>
        <dbReference type="ChEBI" id="CHEBI:17568"/>
        <dbReference type="ChEBI" id="CHEBI:43474"/>
        <dbReference type="ChEBI" id="CHEBI:57259"/>
        <dbReference type="EC" id="2.4.2.2"/>
    </reaction>
</comment>
<comment type="cofactor">
    <cofactor evidence="1">
        <name>K(+)</name>
        <dbReference type="ChEBI" id="CHEBI:29103"/>
    </cofactor>
    <text evidence="1">Binds 1 K(+) ion per subunit.</text>
</comment>
<comment type="subunit">
    <text evidence="1">Homodimer.</text>
</comment>
<comment type="similarity">
    <text evidence="2">Belongs to the thymidine/pyrimidine-nucleoside phosphorylase family.</text>
</comment>
<reference key="1">
    <citation type="book" date="2006" name="Gram positive pathogens, 2nd edition">
        <title>The Staphylococcus aureus NCTC 8325 genome.</title>
        <editorList>
            <person name="Fischetti V."/>
            <person name="Novick R."/>
            <person name="Ferretti J."/>
            <person name="Portnoy D."/>
            <person name="Rood J."/>
        </editorList>
        <authorList>
            <person name="Gillaspy A.F."/>
            <person name="Worrell V."/>
            <person name="Orvis J."/>
            <person name="Roe B.A."/>
            <person name="Dyer D.W."/>
            <person name="Iandolo J.J."/>
        </authorList>
    </citation>
    <scope>NUCLEOTIDE SEQUENCE [LARGE SCALE GENOMIC DNA]</scope>
    <source>
        <strain>NCTC 8325 / PS 47</strain>
    </source>
</reference>
<feature type="chain" id="PRO_0000269531" description="Pyrimidine-nucleoside phosphorylase">
    <location>
        <begin position="1"/>
        <end position="433"/>
    </location>
</feature>
<feature type="binding site" evidence="1">
    <location>
        <begin position="81"/>
        <end position="83"/>
    </location>
    <ligand>
        <name>phosphate</name>
        <dbReference type="ChEBI" id="CHEBI:43474"/>
    </ligand>
</feature>
<feature type="binding site" evidence="1">
    <location>
        <position position="88"/>
    </location>
    <ligand>
        <name>K(+)</name>
        <dbReference type="ChEBI" id="CHEBI:29103"/>
    </ligand>
</feature>
<feature type="binding site" evidence="1">
    <location>
        <position position="90"/>
    </location>
    <ligand>
        <name>K(+)</name>
        <dbReference type="ChEBI" id="CHEBI:29103"/>
    </ligand>
</feature>
<feature type="binding site" evidence="1">
    <location>
        <position position="92"/>
    </location>
    <ligand>
        <name>phosphate</name>
        <dbReference type="ChEBI" id="CHEBI:43474"/>
    </ligand>
</feature>
<feature type="binding site" evidence="1">
    <location>
        <begin position="108"/>
        <end position="110"/>
    </location>
    <ligand>
        <name>phosphate</name>
        <dbReference type="ChEBI" id="CHEBI:43474"/>
    </ligand>
</feature>
<feature type="binding site" evidence="1">
    <location>
        <position position="120"/>
    </location>
    <ligand>
        <name>phosphate</name>
        <dbReference type="ChEBI" id="CHEBI:43474"/>
    </ligand>
</feature>
<feature type="binding site" evidence="1">
    <location>
        <position position="168"/>
    </location>
    <ligand>
        <name>substrate</name>
    </ligand>
</feature>
<feature type="binding site" evidence="1">
    <location>
        <position position="187"/>
    </location>
    <ligand>
        <name>substrate</name>
    </ligand>
</feature>
<feature type="binding site" evidence="1">
    <location>
        <position position="243"/>
    </location>
    <ligand>
        <name>K(+)</name>
        <dbReference type="ChEBI" id="CHEBI:29103"/>
    </ligand>
</feature>
<feature type="binding site" evidence="1">
    <location>
        <position position="246"/>
    </location>
    <ligand>
        <name>K(+)</name>
        <dbReference type="ChEBI" id="CHEBI:29103"/>
    </ligand>
</feature>
<feature type="binding site" evidence="1">
    <location>
        <position position="255"/>
    </location>
    <ligand>
        <name>K(+)</name>
        <dbReference type="ChEBI" id="CHEBI:29103"/>
    </ligand>
</feature>
<proteinExistence type="inferred from homology"/>
<sequence>MRMIDIIEKKRDGHTLTTEEINFFIGGYVKGDIPDYQASSLAMAIYFQDMNDDERAALTMAMVNSGDMIDLSDIKGVKVDKHSTGGVGDTTTLVLAPLVAAVDVPVAKMSGRGLGHTGGTIDKLEAIDGFHVEIDEATFVKLVNENKVAVVGQSGNLTPADKKLYALRDVTGTVNSIPLIASSIMSKKIAAGADAIVLDVKTGSGAFMKTLEDAEALAHAMVRIGNNVGRNTMAIISDMNQPLGRAIGNALELQEAIDTLKGQGPKDLTELVLTLGSQMVVLANKAETLEEARALLIEAINSGAALEKFKTFIKNQGGDETVIDHPERLPQAQYQIEYKAKKSGYVTELVSNDIGVASMMLGAGRLTKEDDIDLAVGIVLNKKIGDKVEEGESLLTIHSNRQDVDDVVKKLDSSITIADHVVSPTLIHKIITE</sequence>
<keyword id="KW-0328">Glycosyltransferase</keyword>
<keyword id="KW-0479">Metal-binding</keyword>
<keyword id="KW-0630">Potassium</keyword>
<keyword id="KW-1185">Reference proteome</keyword>
<keyword id="KW-0808">Transferase</keyword>
<organism>
    <name type="scientific">Staphylococcus aureus (strain NCTC 8325 / PS 47)</name>
    <dbReference type="NCBI Taxonomy" id="93061"/>
    <lineage>
        <taxon>Bacteria</taxon>
        <taxon>Bacillati</taxon>
        <taxon>Bacillota</taxon>
        <taxon>Bacilli</taxon>
        <taxon>Bacillales</taxon>
        <taxon>Staphylococcaceae</taxon>
        <taxon>Staphylococcus</taxon>
    </lineage>
</organism>
<protein>
    <recommendedName>
        <fullName>Pyrimidine-nucleoside phosphorylase</fullName>
        <shortName>PYNP</shortName>
        <shortName>Py-NPase</shortName>
        <ecNumber>2.4.2.2</ecNumber>
    </recommendedName>
</protein>
<dbReference type="EC" id="2.4.2.2"/>
<dbReference type="EMBL" id="CP000253">
    <property type="protein sequence ID" value="ABD31408.1"/>
    <property type="molecule type" value="Genomic_DNA"/>
</dbReference>
<dbReference type="RefSeq" id="WP_001242318.1">
    <property type="nucleotide sequence ID" value="NZ_LS483365.1"/>
</dbReference>
<dbReference type="RefSeq" id="YP_500854.1">
    <property type="nucleotide sequence ID" value="NC_007795.1"/>
</dbReference>
<dbReference type="SMR" id="Q2FWC1"/>
<dbReference type="STRING" id="93061.SAOUHSC_02377"/>
<dbReference type="PaxDb" id="1280-SAXN108_2381"/>
<dbReference type="GeneID" id="3919420"/>
<dbReference type="KEGG" id="sao:SAOUHSC_02377"/>
<dbReference type="PATRIC" id="fig|93061.5.peg.2154"/>
<dbReference type="eggNOG" id="COG0213">
    <property type="taxonomic scope" value="Bacteria"/>
</dbReference>
<dbReference type="HOGENOM" id="CLU_025040_0_1_9"/>
<dbReference type="OrthoDB" id="9763887at2"/>
<dbReference type="PRO" id="PR:Q2FWC1"/>
<dbReference type="Proteomes" id="UP000008816">
    <property type="component" value="Chromosome"/>
</dbReference>
<dbReference type="GO" id="GO:0005829">
    <property type="term" value="C:cytosol"/>
    <property type="evidence" value="ECO:0000318"/>
    <property type="project" value="GO_Central"/>
</dbReference>
<dbReference type="GO" id="GO:0004645">
    <property type="term" value="F:1,4-alpha-oligoglucan phosphorylase activity"/>
    <property type="evidence" value="ECO:0007669"/>
    <property type="project" value="InterPro"/>
</dbReference>
<dbReference type="GO" id="GO:0047847">
    <property type="term" value="F:deoxyuridine phosphorylase activity"/>
    <property type="evidence" value="ECO:0007669"/>
    <property type="project" value="RHEA"/>
</dbReference>
<dbReference type="GO" id="GO:0046872">
    <property type="term" value="F:metal ion binding"/>
    <property type="evidence" value="ECO:0007669"/>
    <property type="project" value="UniProtKB-KW"/>
</dbReference>
<dbReference type="GO" id="GO:0009032">
    <property type="term" value="F:thymidine phosphorylase activity"/>
    <property type="evidence" value="ECO:0000318"/>
    <property type="project" value="GO_Central"/>
</dbReference>
<dbReference type="GO" id="GO:0004850">
    <property type="term" value="F:uridine phosphorylase activity"/>
    <property type="evidence" value="ECO:0007669"/>
    <property type="project" value="RHEA"/>
</dbReference>
<dbReference type="GO" id="GO:0006206">
    <property type="term" value="P:pyrimidine nucleobase metabolic process"/>
    <property type="evidence" value="ECO:0007669"/>
    <property type="project" value="InterPro"/>
</dbReference>
<dbReference type="GO" id="GO:0006213">
    <property type="term" value="P:pyrimidine nucleoside metabolic process"/>
    <property type="evidence" value="ECO:0007669"/>
    <property type="project" value="InterPro"/>
</dbReference>
<dbReference type="FunFam" id="1.20.970.10:FF:000002">
    <property type="entry name" value="Pyrimidine-nucleoside phosphorylase"/>
    <property type="match status" value="1"/>
</dbReference>
<dbReference type="FunFam" id="3.40.1030.10:FF:000003">
    <property type="entry name" value="Pyrimidine-nucleoside phosphorylase"/>
    <property type="match status" value="1"/>
</dbReference>
<dbReference type="Gene3D" id="3.40.1030.10">
    <property type="entry name" value="Nucleoside phosphorylase/phosphoribosyltransferase catalytic domain"/>
    <property type="match status" value="1"/>
</dbReference>
<dbReference type="Gene3D" id="3.90.1170.30">
    <property type="entry name" value="Pyrimidine nucleoside phosphorylase-like, C-terminal domain"/>
    <property type="match status" value="1"/>
</dbReference>
<dbReference type="Gene3D" id="1.20.970.10">
    <property type="entry name" value="Transferase, Pyrimidine Nucleoside Phosphorylase, Chain C"/>
    <property type="match status" value="1"/>
</dbReference>
<dbReference type="InterPro" id="IPR000312">
    <property type="entry name" value="Glycosyl_Trfase_fam3"/>
</dbReference>
<dbReference type="InterPro" id="IPR017459">
    <property type="entry name" value="Glycosyl_Trfase_fam3_N_dom"/>
</dbReference>
<dbReference type="InterPro" id="IPR036320">
    <property type="entry name" value="Glycosyl_Trfase_fam3_N_dom_sf"/>
</dbReference>
<dbReference type="InterPro" id="IPR035902">
    <property type="entry name" value="Nuc_phospho_transferase"/>
</dbReference>
<dbReference type="InterPro" id="IPR036566">
    <property type="entry name" value="PYNP-like_C_sf"/>
</dbReference>
<dbReference type="InterPro" id="IPR013102">
    <property type="entry name" value="PYNP_C"/>
</dbReference>
<dbReference type="InterPro" id="IPR018090">
    <property type="entry name" value="Pyrmidine_PPas_bac/euk"/>
</dbReference>
<dbReference type="InterPro" id="IPR017872">
    <property type="entry name" value="Pyrmidine_PPase_CS"/>
</dbReference>
<dbReference type="InterPro" id="IPR000053">
    <property type="entry name" value="Thymidine/pyrmidine_PPase"/>
</dbReference>
<dbReference type="NCBIfam" id="NF004490">
    <property type="entry name" value="PRK05820.1"/>
    <property type="match status" value="1"/>
</dbReference>
<dbReference type="NCBIfam" id="NF004747">
    <property type="entry name" value="PRK06078.1"/>
    <property type="match status" value="1"/>
</dbReference>
<dbReference type="NCBIfam" id="TIGR02644">
    <property type="entry name" value="Y_phosphoryl"/>
    <property type="match status" value="1"/>
</dbReference>
<dbReference type="PANTHER" id="PTHR10515">
    <property type="entry name" value="THYMIDINE PHOSPHORYLASE"/>
    <property type="match status" value="1"/>
</dbReference>
<dbReference type="PANTHER" id="PTHR10515:SF0">
    <property type="entry name" value="THYMIDINE PHOSPHORYLASE"/>
    <property type="match status" value="1"/>
</dbReference>
<dbReference type="Pfam" id="PF02885">
    <property type="entry name" value="Glycos_trans_3N"/>
    <property type="match status" value="1"/>
</dbReference>
<dbReference type="Pfam" id="PF00591">
    <property type="entry name" value="Glycos_transf_3"/>
    <property type="match status" value="1"/>
</dbReference>
<dbReference type="Pfam" id="PF07831">
    <property type="entry name" value="PYNP_C"/>
    <property type="match status" value="1"/>
</dbReference>
<dbReference type="PIRSF" id="PIRSF000478">
    <property type="entry name" value="TP_PyNP"/>
    <property type="match status" value="1"/>
</dbReference>
<dbReference type="SMART" id="SM00941">
    <property type="entry name" value="PYNP_C"/>
    <property type="match status" value="1"/>
</dbReference>
<dbReference type="SUPFAM" id="SSF52418">
    <property type="entry name" value="Nucleoside phosphorylase/phosphoribosyltransferase catalytic domain"/>
    <property type="match status" value="1"/>
</dbReference>
<dbReference type="SUPFAM" id="SSF47648">
    <property type="entry name" value="Nucleoside phosphorylase/phosphoribosyltransferase N-terminal domain"/>
    <property type="match status" value="1"/>
</dbReference>
<dbReference type="SUPFAM" id="SSF54680">
    <property type="entry name" value="Pyrimidine nucleoside phosphorylase C-terminal domain"/>
    <property type="match status" value="1"/>
</dbReference>
<dbReference type="PROSITE" id="PS00647">
    <property type="entry name" value="THYMID_PHOSPHORYLASE"/>
    <property type="match status" value="1"/>
</dbReference>
<accession>Q2FWC1</accession>
<name>PDP_STAA8</name>
<evidence type="ECO:0000250" key="1">
    <source>
        <dbReference type="UniProtKB" id="P77836"/>
    </source>
</evidence>
<evidence type="ECO:0000305" key="2"/>